<keyword id="KW-0131">Cell cycle</keyword>
<keyword id="KW-0132">Cell division</keyword>
<keyword id="KW-0997">Cell inner membrane</keyword>
<keyword id="KW-1003">Cell membrane</keyword>
<keyword id="KW-0133">Cell shape</keyword>
<keyword id="KW-0961">Cell wall biogenesis/degradation</keyword>
<keyword id="KW-0460">Magnesium</keyword>
<keyword id="KW-0472">Membrane</keyword>
<keyword id="KW-0479">Metal-binding</keyword>
<keyword id="KW-0573">Peptidoglycan synthesis</keyword>
<keyword id="KW-1185">Reference proteome</keyword>
<keyword id="KW-0808">Transferase</keyword>
<keyword id="KW-0812">Transmembrane</keyword>
<keyword id="KW-1133">Transmembrane helix</keyword>
<organism>
    <name type="scientific">Xanthomonas oryzae pv. oryzae (strain KACC10331 / KXO85)</name>
    <dbReference type="NCBI Taxonomy" id="291331"/>
    <lineage>
        <taxon>Bacteria</taxon>
        <taxon>Pseudomonadati</taxon>
        <taxon>Pseudomonadota</taxon>
        <taxon>Gammaproteobacteria</taxon>
        <taxon>Lysobacterales</taxon>
        <taxon>Lysobacteraceae</taxon>
        <taxon>Xanthomonas</taxon>
    </lineage>
</organism>
<accession>Q5GW39</accession>
<proteinExistence type="inferred from homology"/>
<gene>
    <name evidence="1" type="primary">mraY</name>
    <name type="ordered locus">XOO3828</name>
</gene>
<sequence length="361" mass="39665">MLLELARWLQQLESLFGLFNYLTFRGILAALTALFLSLWMGPAVIRKLAQFKGGQPIRQDGPQTHFSKAGTPTMGGSLILLTVTLSVLLWGDLRNRYVWLVLAVMICFGAIGWYDDWIKIVRRDPNGLKSRWKYLLQSIFGLAAGLFLYYTADVPAAITFYIPMFKSIALPLVGVSFVVIAYFWIVGFSNAVNLTDGLDGLAIMPTVLVACALGVFAYASGNVVFAEYLKIPLIPGAGELIIICSAIAGAGLGFLWFNTYPAMVFMGDIGALSLGAVLGTIAVIVRQEMVLVIMGGVFVIETLSVIIQVASFKLTGKRVFRMAPIHHHFELKGWPEPRVIVRFWIISVVLVLIGLATLKVR</sequence>
<comment type="function">
    <text evidence="1">Catalyzes the initial step of the lipid cycle reactions in the biosynthesis of the cell wall peptidoglycan: transfers peptidoglycan precursor phospho-MurNAc-pentapeptide from UDP-MurNAc-pentapeptide onto the lipid carrier undecaprenyl phosphate, yielding undecaprenyl-pyrophosphoryl-MurNAc-pentapeptide, known as lipid I.</text>
</comment>
<comment type="catalytic activity">
    <reaction evidence="1">
        <text>UDP-N-acetyl-alpha-D-muramoyl-L-alanyl-gamma-D-glutamyl-meso-2,6-diaminopimeloyl-D-alanyl-D-alanine + di-trans,octa-cis-undecaprenyl phosphate = di-trans,octa-cis-undecaprenyl diphospho-N-acetyl-alpha-D-muramoyl-L-alanyl-D-glutamyl-meso-2,6-diaminopimeloyl-D-alanyl-D-alanine + UMP</text>
        <dbReference type="Rhea" id="RHEA:28386"/>
        <dbReference type="ChEBI" id="CHEBI:57865"/>
        <dbReference type="ChEBI" id="CHEBI:60392"/>
        <dbReference type="ChEBI" id="CHEBI:61386"/>
        <dbReference type="ChEBI" id="CHEBI:61387"/>
        <dbReference type="EC" id="2.7.8.13"/>
    </reaction>
</comment>
<comment type="cofactor">
    <cofactor evidence="1">
        <name>Mg(2+)</name>
        <dbReference type="ChEBI" id="CHEBI:18420"/>
    </cofactor>
</comment>
<comment type="pathway">
    <text evidence="1">Cell wall biogenesis; peptidoglycan biosynthesis.</text>
</comment>
<comment type="subcellular location">
    <subcellularLocation>
        <location evidence="1">Cell inner membrane</location>
        <topology evidence="1">Multi-pass membrane protein</topology>
    </subcellularLocation>
</comment>
<comment type="similarity">
    <text evidence="1">Belongs to the glycosyltransferase 4 family. MraY subfamily.</text>
</comment>
<evidence type="ECO:0000255" key="1">
    <source>
        <dbReference type="HAMAP-Rule" id="MF_00038"/>
    </source>
</evidence>
<feature type="chain" id="PRO_0000235503" description="Phospho-N-acetylmuramoyl-pentapeptide-transferase">
    <location>
        <begin position="1"/>
        <end position="361"/>
    </location>
</feature>
<feature type="transmembrane region" description="Helical" evidence="1">
    <location>
        <begin position="25"/>
        <end position="45"/>
    </location>
</feature>
<feature type="transmembrane region" description="Helical" evidence="1">
    <location>
        <begin position="73"/>
        <end position="93"/>
    </location>
</feature>
<feature type="transmembrane region" description="Helical" evidence="1">
    <location>
        <begin position="98"/>
        <end position="118"/>
    </location>
</feature>
<feature type="transmembrane region" description="Helical" evidence="1">
    <location>
        <begin position="139"/>
        <end position="159"/>
    </location>
</feature>
<feature type="transmembrane region" description="Helical" evidence="1">
    <location>
        <begin position="168"/>
        <end position="188"/>
    </location>
</feature>
<feature type="transmembrane region" description="Helical" evidence="1">
    <location>
        <begin position="200"/>
        <end position="220"/>
    </location>
</feature>
<feature type="transmembrane region" description="Helical" evidence="1">
    <location>
        <begin position="237"/>
        <end position="257"/>
    </location>
</feature>
<feature type="transmembrane region" description="Helical" evidence="1">
    <location>
        <begin position="264"/>
        <end position="284"/>
    </location>
</feature>
<feature type="transmembrane region" description="Helical" evidence="1">
    <location>
        <begin position="289"/>
        <end position="309"/>
    </location>
</feature>
<feature type="transmembrane region" description="Helical" evidence="1">
    <location>
        <begin position="339"/>
        <end position="359"/>
    </location>
</feature>
<dbReference type="EC" id="2.7.8.13" evidence="1"/>
<dbReference type="EMBL" id="AE013598">
    <property type="protein sequence ID" value="AAW77082.1"/>
    <property type="molecule type" value="Genomic_DNA"/>
</dbReference>
<dbReference type="SMR" id="Q5GW39"/>
<dbReference type="STRING" id="291331.XOO3828"/>
<dbReference type="KEGG" id="xoo:XOO3828"/>
<dbReference type="HOGENOM" id="CLU_023982_0_0_6"/>
<dbReference type="UniPathway" id="UPA00219"/>
<dbReference type="Proteomes" id="UP000006735">
    <property type="component" value="Chromosome"/>
</dbReference>
<dbReference type="GO" id="GO:0005886">
    <property type="term" value="C:plasma membrane"/>
    <property type="evidence" value="ECO:0007669"/>
    <property type="project" value="UniProtKB-SubCell"/>
</dbReference>
<dbReference type="GO" id="GO:0046872">
    <property type="term" value="F:metal ion binding"/>
    <property type="evidence" value="ECO:0007669"/>
    <property type="project" value="UniProtKB-KW"/>
</dbReference>
<dbReference type="GO" id="GO:0008963">
    <property type="term" value="F:phospho-N-acetylmuramoyl-pentapeptide-transferase activity"/>
    <property type="evidence" value="ECO:0007669"/>
    <property type="project" value="UniProtKB-UniRule"/>
</dbReference>
<dbReference type="GO" id="GO:0051992">
    <property type="term" value="F:UDP-N-acetylmuramoyl-L-alanyl-D-glutamyl-meso-2,6-diaminopimelyl-D-alanyl-D-alanine:undecaprenyl-phosphate transferase activity"/>
    <property type="evidence" value="ECO:0007669"/>
    <property type="project" value="RHEA"/>
</dbReference>
<dbReference type="GO" id="GO:0051301">
    <property type="term" value="P:cell division"/>
    <property type="evidence" value="ECO:0007669"/>
    <property type="project" value="UniProtKB-KW"/>
</dbReference>
<dbReference type="GO" id="GO:0071555">
    <property type="term" value="P:cell wall organization"/>
    <property type="evidence" value="ECO:0007669"/>
    <property type="project" value="UniProtKB-KW"/>
</dbReference>
<dbReference type="GO" id="GO:0009252">
    <property type="term" value="P:peptidoglycan biosynthetic process"/>
    <property type="evidence" value="ECO:0007669"/>
    <property type="project" value="UniProtKB-UniRule"/>
</dbReference>
<dbReference type="GO" id="GO:0008360">
    <property type="term" value="P:regulation of cell shape"/>
    <property type="evidence" value="ECO:0007669"/>
    <property type="project" value="UniProtKB-KW"/>
</dbReference>
<dbReference type="CDD" id="cd06852">
    <property type="entry name" value="GT_MraY"/>
    <property type="match status" value="1"/>
</dbReference>
<dbReference type="HAMAP" id="MF_00038">
    <property type="entry name" value="MraY"/>
    <property type="match status" value="1"/>
</dbReference>
<dbReference type="InterPro" id="IPR000715">
    <property type="entry name" value="Glycosyl_transferase_4"/>
</dbReference>
<dbReference type="InterPro" id="IPR003524">
    <property type="entry name" value="PNAcMuramoyl-5peptid_Trfase"/>
</dbReference>
<dbReference type="InterPro" id="IPR018480">
    <property type="entry name" value="PNAcMuramoyl-5peptid_Trfase_CS"/>
</dbReference>
<dbReference type="NCBIfam" id="TIGR00445">
    <property type="entry name" value="mraY"/>
    <property type="match status" value="1"/>
</dbReference>
<dbReference type="PANTHER" id="PTHR22926">
    <property type="entry name" value="PHOSPHO-N-ACETYLMURAMOYL-PENTAPEPTIDE-TRANSFERASE"/>
    <property type="match status" value="1"/>
</dbReference>
<dbReference type="PANTHER" id="PTHR22926:SF5">
    <property type="entry name" value="PHOSPHO-N-ACETYLMURAMOYL-PENTAPEPTIDE-TRANSFERASE HOMOLOG"/>
    <property type="match status" value="1"/>
</dbReference>
<dbReference type="Pfam" id="PF00953">
    <property type="entry name" value="Glycos_transf_4"/>
    <property type="match status" value="1"/>
</dbReference>
<dbReference type="PROSITE" id="PS01347">
    <property type="entry name" value="MRAY_1"/>
    <property type="match status" value="1"/>
</dbReference>
<dbReference type="PROSITE" id="PS01348">
    <property type="entry name" value="MRAY_2"/>
    <property type="match status" value="1"/>
</dbReference>
<reference key="1">
    <citation type="journal article" date="2005" name="Nucleic Acids Res.">
        <title>The genome sequence of Xanthomonas oryzae pathovar oryzae KACC10331, the bacterial blight pathogen of rice.</title>
        <authorList>
            <person name="Lee B.-M."/>
            <person name="Park Y.-J."/>
            <person name="Park D.-S."/>
            <person name="Kang H.-W."/>
            <person name="Kim J.-G."/>
            <person name="Song E.-S."/>
            <person name="Park I.-C."/>
            <person name="Yoon U.-H."/>
            <person name="Hahn J.-H."/>
            <person name="Koo B.-S."/>
            <person name="Lee G.-B."/>
            <person name="Kim H."/>
            <person name="Park H.-S."/>
            <person name="Yoon K.-O."/>
            <person name="Kim J.-H."/>
            <person name="Jung C.-H."/>
            <person name="Koh N.-H."/>
            <person name="Seo J.-S."/>
            <person name="Go S.-J."/>
        </authorList>
    </citation>
    <scope>NUCLEOTIDE SEQUENCE [LARGE SCALE GENOMIC DNA]</scope>
    <source>
        <strain>KACC10331 / KXO85</strain>
    </source>
</reference>
<name>MRAY_XANOR</name>
<protein>
    <recommendedName>
        <fullName evidence="1">Phospho-N-acetylmuramoyl-pentapeptide-transferase</fullName>
        <ecNumber evidence="1">2.7.8.13</ecNumber>
    </recommendedName>
    <alternativeName>
        <fullName evidence="1">UDP-MurNAc-pentapeptide phosphotransferase</fullName>
    </alternativeName>
</protein>